<dbReference type="EMBL" id="CP001344">
    <property type="protein sequence ID" value="ACL46439.1"/>
    <property type="molecule type" value="Genomic_DNA"/>
</dbReference>
<dbReference type="SMR" id="B8HWL3"/>
<dbReference type="STRING" id="395961.Cyan7425_4125"/>
<dbReference type="KEGG" id="cyn:Cyan7425_4125"/>
<dbReference type="eggNOG" id="COG2052">
    <property type="taxonomic scope" value="Bacteria"/>
</dbReference>
<dbReference type="HOGENOM" id="CLU_165326_0_0_3"/>
<dbReference type="OrthoDB" id="5432174at2"/>
<dbReference type="HAMAP" id="MF_01503">
    <property type="entry name" value="RemA"/>
    <property type="match status" value="1"/>
</dbReference>
<dbReference type="InterPro" id="IPR007169">
    <property type="entry name" value="RemA-like"/>
</dbReference>
<dbReference type="NCBIfam" id="NF046064">
    <property type="entry name" value="MtxBflmRegRemA"/>
    <property type="match status" value="1"/>
</dbReference>
<dbReference type="NCBIfam" id="NF003315">
    <property type="entry name" value="PRK04323.1"/>
    <property type="match status" value="1"/>
</dbReference>
<dbReference type="PANTHER" id="PTHR38449:SF1">
    <property type="entry name" value="REGULATORY PROTEIN SSL2874-RELATED"/>
    <property type="match status" value="1"/>
</dbReference>
<dbReference type="PANTHER" id="PTHR38449">
    <property type="entry name" value="REGULATORY PROTEIN TM_1690-RELATED"/>
    <property type="match status" value="1"/>
</dbReference>
<dbReference type="Pfam" id="PF04025">
    <property type="entry name" value="RemA-like"/>
    <property type="match status" value="1"/>
</dbReference>
<accession>B8HWL3</accession>
<gene>
    <name type="ordered locus">Cyan7425_4125</name>
</gene>
<sequence length="91" mass="9894">MDIKLINIGFGNIVSAHRVIAIVSPESSPIKRIITEAREKGQLIDATYGRRTRAVIIADSGHVILSAIQPETVANRFLLSRDVHDSSSSPC</sequence>
<reference key="1">
    <citation type="journal article" date="2011" name="MBio">
        <title>Novel metabolic attributes of the genus Cyanothece, comprising a group of unicellular nitrogen-fixing Cyanobacteria.</title>
        <authorList>
            <person name="Bandyopadhyay A."/>
            <person name="Elvitigala T."/>
            <person name="Welsh E."/>
            <person name="Stockel J."/>
            <person name="Liberton M."/>
            <person name="Min H."/>
            <person name="Sherman L.A."/>
            <person name="Pakrasi H.B."/>
        </authorList>
    </citation>
    <scope>NUCLEOTIDE SEQUENCE [LARGE SCALE GENOMIC DNA]</scope>
    <source>
        <strain>PCC 7425 / ATCC 29141</strain>
    </source>
</reference>
<protein>
    <recommendedName>
        <fullName evidence="1">Putative regulatory protein Cyan7425_4125</fullName>
    </recommendedName>
</protein>
<proteinExistence type="inferred from homology"/>
<organism>
    <name type="scientific">Cyanothece sp. (strain PCC 7425 / ATCC 29141)</name>
    <dbReference type="NCBI Taxonomy" id="395961"/>
    <lineage>
        <taxon>Bacteria</taxon>
        <taxon>Bacillati</taxon>
        <taxon>Cyanobacteriota</taxon>
        <taxon>Cyanophyceae</taxon>
        <taxon>Gomontiellales</taxon>
        <taxon>Cyanothecaceae</taxon>
        <taxon>Cyanothece</taxon>
    </lineage>
</organism>
<comment type="similarity">
    <text evidence="1">Belongs to the RemA family.</text>
</comment>
<feature type="chain" id="PRO_1000185017" description="Putative regulatory protein Cyan7425_4125">
    <location>
        <begin position="1"/>
        <end position="91"/>
    </location>
</feature>
<name>Y4125_CYAP4</name>
<evidence type="ECO:0000255" key="1">
    <source>
        <dbReference type="HAMAP-Rule" id="MF_01503"/>
    </source>
</evidence>